<reference key="1">
    <citation type="journal article" date="2009" name="PLoS Genet.">
        <title>Organised genome dynamics in the Escherichia coli species results in highly diverse adaptive paths.</title>
        <authorList>
            <person name="Touchon M."/>
            <person name="Hoede C."/>
            <person name="Tenaillon O."/>
            <person name="Barbe V."/>
            <person name="Baeriswyl S."/>
            <person name="Bidet P."/>
            <person name="Bingen E."/>
            <person name="Bonacorsi S."/>
            <person name="Bouchier C."/>
            <person name="Bouvet O."/>
            <person name="Calteau A."/>
            <person name="Chiapello H."/>
            <person name="Clermont O."/>
            <person name="Cruveiller S."/>
            <person name="Danchin A."/>
            <person name="Diard M."/>
            <person name="Dossat C."/>
            <person name="Karoui M.E."/>
            <person name="Frapy E."/>
            <person name="Garry L."/>
            <person name="Ghigo J.M."/>
            <person name="Gilles A.M."/>
            <person name="Johnson J."/>
            <person name="Le Bouguenec C."/>
            <person name="Lescat M."/>
            <person name="Mangenot S."/>
            <person name="Martinez-Jehanne V."/>
            <person name="Matic I."/>
            <person name="Nassif X."/>
            <person name="Oztas S."/>
            <person name="Petit M.A."/>
            <person name="Pichon C."/>
            <person name="Rouy Z."/>
            <person name="Ruf C.S."/>
            <person name="Schneider D."/>
            <person name="Tourret J."/>
            <person name="Vacherie B."/>
            <person name="Vallenet D."/>
            <person name="Medigue C."/>
            <person name="Rocha E.P.C."/>
            <person name="Denamur E."/>
        </authorList>
    </citation>
    <scope>NUCLEOTIDE SEQUENCE [LARGE SCALE GENOMIC DNA]</scope>
    <source>
        <strain>ED1a</strain>
    </source>
</reference>
<name>PDXA_ECO81</name>
<proteinExistence type="inferred from homology"/>
<organism>
    <name type="scientific">Escherichia coli O81 (strain ED1a)</name>
    <dbReference type="NCBI Taxonomy" id="585397"/>
    <lineage>
        <taxon>Bacteria</taxon>
        <taxon>Pseudomonadati</taxon>
        <taxon>Pseudomonadota</taxon>
        <taxon>Gammaproteobacteria</taxon>
        <taxon>Enterobacterales</taxon>
        <taxon>Enterobacteriaceae</taxon>
        <taxon>Escherichia</taxon>
    </lineage>
</organism>
<keyword id="KW-0170">Cobalt</keyword>
<keyword id="KW-0963">Cytoplasm</keyword>
<keyword id="KW-0460">Magnesium</keyword>
<keyword id="KW-0479">Metal-binding</keyword>
<keyword id="KW-0520">NAD</keyword>
<keyword id="KW-0521">NADP</keyword>
<keyword id="KW-0560">Oxidoreductase</keyword>
<keyword id="KW-0664">Pyridoxine biosynthesis</keyword>
<keyword id="KW-0862">Zinc</keyword>
<comment type="function">
    <text evidence="1">Catalyzes the NAD(P)-dependent oxidation of 4-(phosphooxy)-L-threonine (HTP) into 2-amino-3-oxo-4-(phosphooxy)butyric acid which spontaneously decarboxylates to form 3-amino-2-oxopropyl phosphate (AHAP).</text>
</comment>
<comment type="catalytic activity">
    <reaction evidence="1">
        <text>4-(phosphooxy)-L-threonine + NAD(+) = 3-amino-2-oxopropyl phosphate + CO2 + NADH</text>
        <dbReference type="Rhea" id="RHEA:32275"/>
        <dbReference type="ChEBI" id="CHEBI:16526"/>
        <dbReference type="ChEBI" id="CHEBI:57279"/>
        <dbReference type="ChEBI" id="CHEBI:57540"/>
        <dbReference type="ChEBI" id="CHEBI:57945"/>
        <dbReference type="ChEBI" id="CHEBI:58452"/>
        <dbReference type="EC" id="1.1.1.262"/>
    </reaction>
</comment>
<comment type="cofactor">
    <cofactor evidence="1">
        <name>Zn(2+)</name>
        <dbReference type="ChEBI" id="CHEBI:29105"/>
    </cofactor>
    <cofactor evidence="1">
        <name>Mg(2+)</name>
        <dbReference type="ChEBI" id="CHEBI:18420"/>
    </cofactor>
    <cofactor evidence="1">
        <name>Co(2+)</name>
        <dbReference type="ChEBI" id="CHEBI:48828"/>
    </cofactor>
    <text evidence="1">Binds 1 divalent metal cation per subunit. Can use ions such as Zn(2+), Mg(2+) or Co(2+).</text>
</comment>
<comment type="pathway">
    <text evidence="1">Cofactor biosynthesis; pyridoxine 5'-phosphate biosynthesis; pyridoxine 5'-phosphate from D-erythrose 4-phosphate: step 4/5.</text>
</comment>
<comment type="subunit">
    <text evidence="1">Homodimer.</text>
</comment>
<comment type="subcellular location">
    <subcellularLocation>
        <location evidence="1">Cytoplasm</location>
    </subcellularLocation>
</comment>
<comment type="miscellaneous">
    <text evidence="1">The active site is located at the dimer interface.</text>
</comment>
<comment type="similarity">
    <text evidence="1">Belongs to the PdxA family.</text>
</comment>
<evidence type="ECO:0000255" key="1">
    <source>
        <dbReference type="HAMAP-Rule" id="MF_00536"/>
    </source>
</evidence>
<protein>
    <recommendedName>
        <fullName evidence="1">4-hydroxythreonine-4-phosphate dehydrogenase</fullName>
        <ecNumber evidence="1">1.1.1.262</ecNumber>
    </recommendedName>
    <alternativeName>
        <fullName evidence="1">4-(phosphohydroxy)-L-threonine dehydrogenase</fullName>
    </alternativeName>
</protein>
<feature type="chain" id="PRO_1000146488" description="4-hydroxythreonine-4-phosphate dehydrogenase">
    <location>
        <begin position="1"/>
        <end position="329"/>
    </location>
</feature>
<feature type="binding site" evidence="1">
    <location>
        <position position="136"/>
    </location>
    <ligand>
        <name>substrate</name>
    </ligand>
</feature>
<feature type="binding site" evidence="1">
    <location>
        <position position="137"/>
    </location>
    <ligand>
        <name>substrate</name>
    </ligand>
</feature>
<feature type="binding site" evidence="1">
    <location>
        <position position="166"/>
    </location>
    <ligand>
        <name>a divalent metal cation</name>
        <dbReference type="ChEBI" id="CHEBI:60240"/>
        <note>ligand shared between dimeric partners</note>
    </ligand>
</feature>
<feature type="binding site" evidence="1">
    <location>
        <position position="211"/>
    </location>
    <ligand>
        <name>a divalent metal cation</name>
        <dbReference type="ChEBI" id="CHEBI:60240"/>
        <note>ligand shared between dimeric partners</note>
    </ligand>
</feature>
<feature type="binding site" evidence="1">
    <location>
        <position position="266"/>
    </location>
    <ligand>
        <name>a divalent metal cation</name>
        <dbReference type="ChEBI" id="CHEBI:60240"/>
        <note>ligand shared between dimeric partners</note>
    </ligand>
</feature>
<feature type="binding site" evidence="1">
    <location>
        <position position="274"/>
    </location>
    <ligand>
        <name>substrate</name>
    </ligand>
</feature>
<feature type="binding site" evidence="1">
    <location>
        <position position="283"/>
    </location>
    <ligand>
        <name>substrate</name>
    </ligand>
</feature>
<feature type="binding site" evidence="1">
    <location>
        <position position="292"/>
    </location>
    <ligand>
        <name>substrate</name>
    </ligand>
</feature>
<dbReference type="EC" id="1.1.1.262" evidence="1"/>
<dbReference type="EMBL" id="CU928162">
    <property type="protein sequence ID" value="CAR06276.1"/>
    <property type="molecule type" value="Genomic_DNA"/>
</dbReference>
<dbReference type="RefSeq" id="WP_000241230.1">
    <property type="nucleotide sequence ID" value="NC_011745.1"/>
</dbReference>
<dbReference type="SMR" id="B7MNR1"/>
<dbReference type="KEGG" id="ecq:ECED1_0053"/>
<dbReference type="HOGENOM" id="CLU_040168_1_0_6"/>
<dbReference type="UniPathway" id="UPA00244">
    <property type="reaction ID" value="UER00312"/>
</dbReference>
<dbReference type="Proteomes" id="UP000000748">
    <property type="component" value="Chromosome"/>
</dbReference>
<dbReference type="GO" id="GO:0005737">
    <property type="term" value="C:cytoplasm"/>
    <property type="evidence" value="ECO:0007669"/>
    <property type="project" value="UniProtKB-SubCell"/>
</dbReference>
<dbReference type="GO" id="GO:0050570">
    <property type="term" value="F:4-hydroxythreonine-4-phosphate dehydrogenase activity"/>
    <property type="evidence" value="ECO:0007669"/>
    <property type="project" value="UniProtKB-UniRule"/>
</dbReference>
<dbReference type="GO" id="GO:0050897">
    <property type="term" value="F:cobalt ion binding"/>
    <property type="evidence" value="ECO:0007669"/>
    <property type="project" value="UniProtKB-UniRule"/>
</dbReference>
<dbReference type="GO" id="GO:0000287">
    <property type="term" value="F:magnesium ion binding"/>
    <property type="evidence" value="ECO:0007669"/>
    <property type="project" value="UniProtKB-UniRule"/>
</dbReference>
<dbReference type="GO" id="GO:0051287">
    <property type="term" value="F:NAD binding"/>
    <property type="evidence" value="ECO:0007669"/>
    <property type="project" value="InterPro"/>
</dbReference>
<dbReference type="GO" id="GO:0008270">
    <property type="term" value="F:zinc ion binding"/>
    <property type="evidence" value="ECO:0007669"/>
    <property type="project" value="UniProtKB-UniRule"/>
</dbReference>
<dbReference type="GO" id="GO:0042823">
    <property type="term" value="P:pyridoxal phosphate biosynthetic process"/>
    <property type="evidence" value="ECO:0007669"/>
    <property type="project" value="UniProtKB-UniRule"/>
</dbReference>
<dbReference type="GO" id="GO:0008615">
    <property type="term" value="P:pyridoxine biosynthetic process"/>
    <property type="evidence" value="ECO:0007669"/>
    <property type="project" value="UniProtKB-UniRule"/>
</dbReference>
<dbReference type="FunFam" id="3.40.718.10:FF:000010">
    <property type="entry name" value="4-hydroxythreonine-4-phosphate dehydrogenase"/>
    <property type="match status" value="1"/>
</dbReference>
<dbReference type="Gene3D" id="3.40.718.10">
    <property type="entry name" value="Isopropylmalate Dehydrogenase"/>
    <property type="match status" value="1"/>
</dbReference>
<dbReference type="HAMAP" id="MF_00536">
    <property type="entry name" value="PdxA"/>
    <property type="match status" value="1"/>
</dbReference>
<dbReference type="InterPro" id="IPR037510">
    <property type="entry name" value="PdxA"/>
</dbReference>
<dbReference type="InterPro" id="IPR005255">
    <property type="entry name" value="PdxA_fam"/>
</dbReference>
<dbReference type="NCBIfam" id="TIGR00557">
    <property type="entry name" value="pdxA"/>
    <property type="match status" value="1"/>
</dbReference>
<dbReference type="PANTHER" id="PTHR30004">
    <property type="entry name" value="4-HYDROXYTHREONINE-4-PHOSPHATE DEHYDROGENASE"/>
    <property type="match status" value="1"/>
</dbReference>
<dbReference type="PANTHER" id="PTHR30004:SF5">
    <property type="entry name" value="4-HYDROXYTHREONINE-4-PHOSPHATE DEHYDROGENASE"/>
    <property type="match status" value="1"/>
</dbReference>
<dbReference type="Pfam" id="PF04166">
    <property type="entry name" value="PdxA"/>
    <property type="match status" value="1"/>
</dbReference>
<dbReference type="SUPFAM" id="SSF53659">
    <property type="entry name" value="Isocitrate/Isopropylmalate dehydrogenase-like"/>
    <property type="match status" value="1"/>
</dbReference>
<sequence>MVKTQRVVITPGEPAGIGPDLIVQLAQREWPVELVVCADATLLTDRAAMLGLPLTLRPYSPNSPAQPQTAGTLTLLPVVLRESVTAGQLAVENGHYVVETLARACDGCLNGEFAALITGPVHKGVINDAGIPFTGHTEFFEERSQAKKVVMMLATEELRVALATTHLPLRDIADAITPALLHEVIAILHHDLRTKFGIAEPRILVCGLNPHAGEGGHMGTEEIDTIIPVLNELREQGMKLNGPLPADTLFQPKYLDNADAVLAMYHDQGLPVLKYQGFGRGVNITLGLPFIRTSVDHGTALELAGRGKADVGSFITALNLAIKMIVNTQ</sequence>
<accession>B7MNR1</accession>
<gene>
    <name evidence="1" type="primary">pdxA</name>
    <name type="ordered locus">ECED1_0053</name>
</gene>